<evidence type="ECO:0000255" key="1">
    <source>
        <dbReference type="HAMAP-Rule" id="MF_01416"/>
    </source>
</evidence>
<reference key="1">
    <citation type="journal article" date="2008" name="J. Bacteriol.">
        <title>The pangenome structure of Escherichia coli: comparative genomic analysis of E. coli commensal and pathogenic isolates.</title>
        <authorList>
            <person name="Rasko D.A."/>
            <person name="Rosovitz M.J."/>
            <person name="Myers G.S.A."/>
            <person name="Mongodin E.F."/>
            <person name="Fricke W.F."/>
            <person name="Gajer P."/>
            <person name="Crabtree J."/>
            <person name="Sebaihia M."/>
            <person name="Thomson N.R."/>
            <person name="Chaudhuri R."/>
            <person name="Henderson I.R."/>
            <person name="Sperandio V."/>
            <person name="Ravel J."/>
        </authorList>
    </citation>
    <scope>NUCLEOTIDE SEQUENCE [LARGE SCALE GENOMIC DNA]</scope>
    <source>
        <strain>E24377A / ETEC</strain>
    </source>
</reference>
<comment type="function">
    <text evidence="1">F(1)F(0) ATP synthase produces ATP from ADP in the presence of a proton or sodium gradient. F-type ATPases consist of two structural domains, F(1) containing the extramembraneous catalytic core and F(0) containing the membrane proton channel, linked together by a central stalk and a peripheral stalk. During catalysis, ATP synthesis in the catalytic domain of F(1) is coupled via a rotary mechanism of the central stalk subunits to proton translocation.</text>
</comment>
<comment type="function">
    <text evidence="1">This protein is part of the stalk that links CF(0) to CF(1). It either transmits conformational changes from CF(0) to CF(1) or is implicated in proton conduction.</text>
</comment>
<comment type="subunit">
    <text evidence="1">F-type ATPases have 2 components, F(1) - the catalytic core - and F(0) - the membrane proton channel. F(1) has five subunits: alpha(3), beta(3), gamma(1), delta(1), epsilon(1). F(0) has three main subunits: a(1), b(2) and c(10-14). The alpha and beta chains form an alternating ring which encloses part of the gamma chain. F(1) is attached to F(0) by a central stalk formed by the gamma and epsilon chains, while a peripheral stalk is formed by the delta and b chains.</text>
</comment>
<comment type="subcellular location">
    <subcellularLocation>
        <location evidence="1">Cell inner membrane</location>
        <topology evidence="1">Peripheral membrane protein</topology>
    </subcellularLocation>
</comment>
<comment type="similarity">
    <text evidence="1">Belongs to the ATPase delta chain family.</text>
</comment>
<protein>
    <recommendedName>
        <fullName evidence="1">ATP synthase subunit delta</fullName>
    </recommendedName>
    <alternativeName>
        <fullName evidence="1">ATP synthase F(1) sector subunit delta</fullName>
    </alternativeName>
    <alternativeName>
        <fullName evidence="1">F-type ATPase subunit delta</fullName>
        <shortName evidence="1">F-ATPase subunit delta</shortName>
    </alternativeName>
</protein>
<gene>
    <name evidence="1" type="primary">atpH</name>
    <name type="ordered locus">EcE24377A_4251</name>
</gene>
<dbReference type="EMBL" id="CP000800">
    <property type="protein sequence ID" value="ABV20584.1"/>
    <property type="molecule type" value="Genomic_DNA"/>
</dbReference>
<dbReference type="RefSeq" id="WP_001288587.1">
    <property type="nucleotide sequence ID" value="NC_009801.1"/>
</dbReference>
<dbReference type="SMR" id="A7ZTU7"/>
<dbReference type="GeneID" id="93778232"/>
<dbReference type="KEGG" id="ecw:EcE24377A_4251"/>
<dbReference type="HOGENOM" id="CLU_085114_3_0_6"/>
<dbReference type="Proteomes" id="UP000001122">
    <property type="component" value="Chromosome"/>
</dbReference>
<dbReference type="GO" id="GO:0005886">
    <property type="term" value="C:plasma membrane"/>
    <property type="evidence" value="ECO:0007669"/>
    <property type="project" value="UniProtKB-SubCell"/>
</dbReference>
<dbReference type="GO" id="GO:0045259">
    <property type="term" value="C:proton-transporting ATP synthase complex"/>
    <property type="evidence" value="ECO:0007669"/>
    <property type="project" value="UniProtKB-KW"/>
</dbReference>
<dbReference type="GO" id="GO:0046933">
    <property type="term" value="F:proton-transporting ATP synthase activity, rotational mechanism"/>
    <property type="evidence" value="ECO:0007669"/>
    <property type="project" value="UniProtKB-UniRule"/>
</dbReference>
<dbReference type="FunFam" id="1.10.520.20:FF:000001">
    <property type="entry name" value="ATP synthase subunit delta"/>
    <property type="match status" value="1"/>
</dbReference>
<dbReference type="Gene3D" id="1.10.520.20">
    <property type="entry name" value="N-terminal domain of the delta subunit of the F1F0-ATP synthase"/>
    <property type="match status" value="1"/>
</dbReference>
<dbReference type="HAMAP" id="MF_01416">
    <property type="entry name" value="ATP_synth_delta_bact"/>
    <property type="match status" value="1"/>
</dbReference>
<dbReference type="InterPro" id="IPR026015">
    <property type="entry name" value="ATP_synth_OSCP/delta_N_sf"/>
</dbReference>
<dbReference type="InterPro" id="IPR020781">
    <property type="entry name" value="ATPase_OSCP/d_CS"/>
</dbReference>
<dbReference type="InterPro" id="IPR000711">
    <property type="entry name" value="ATPase_OSCP/dsu"/>
</dbReference>
<dbReference type="NCBIfam" id="TIGR01145">
    <property type="entry name" value="ATP_synt_delta"/>
    <property type="match status" value="1"/>
</dbReference>
<dbReference type="NCBIfam" id="NF004402">
    <property type="entry name" value="PRK05758.2-2"/>
    <property type="match status" value="1"/>
</dbReference>
<dbReference type="NCBIfam" id="NF004404">
    <property type="entry name" value="PRK05758.2-5"/>
    <property type="match status" value="1"/>
</dbReference>
<dbReference type="PANTHER" id="PTHR11910">
    <property type="entry name" value="ATP SYNTHASE DELTA CHAIN"/>
    <property type="match status" value="1"/>
</dbReference>
<dbReference type="Pfam" id="PF00213">
    <property type="entry name" value="OSCP"/>
    <property type="match status" value="1"/>
</dbReference>
<dbReference type="PRINTS" id="PR00125">
    <property type="entry name" value="ATPASEDELTA"/>
</dbReference>
<dbReference type="SUPFAM" id="SSF47928">
    <property type="entry name" value="N-terminal domain of the delta subunit of the F1F0-ATP synthase"/>
    <property type="match status" value="1"/>
</dbReference>
<dbReference type="PROSITE" id="PS00389">
    <property type="entry name" value="ATPASE_DELTA"/>
    <property type="match status" value="1"/>
</dbReference>
<name>ATPD_ECO24</name>
<keyword id="KW-0066">ATP synthesis</keyword>
<keyword id="KW-0997">Cell inner membrane</keyword>
<keyword id="KW-1003">Cell membrane</keyword>
<keyword id="KW-0139">CF(1)</keyword>
<keyword id="KW-0375">Hydrogen ion transport</keyword>
<keyword id="KW-0406">Ion transport</keyword>
<keyword id="KW-0472">Membrane</keyword>
<keyword id="KW-1185">Reference proteome</keyword>
<keyword id="KW-0813">Transport</keyword>
<feature type="chain" id="PRO_0000370976" description="ATP synthase subunit delta">
    <location>
        <begin position="1"/>
        <end position="177"/>
    </location>
</feature>
<organism>
    <name type="scientific">Escherichia coli O139:H28 (strain E24377A / ETEC)</name>
    <dbReference type="NCBI Taxonomy" id="331111"/>
    <lineage>
        <taxon>Bacteria</taxon>
        <taxon>Pseudomonadati</taxon>
        <taxon>Pseudomonadota</taxon>
        <taxon>Gammaproteobacteria</taxon>
        <taxon>Enterobacterales</taxon>
        <taxon>Enterobacteriaceae</taxon>
        <taxon>Escherichia</taxon>
    </lineage>
</organism>
<sequence>MSEFITVARPYAKAAFDFAVEHQSVERWQDMLAFAAEVTKNEQMAELLSGALAPETLAESFIAVCGEQLDENGQNLIRVMAENGRLNALPDVLEQFIHLRAVSEATAEVDVISAAALSEQQLAKISAAMEKRLSRKVKLNCKIDKSVMAGVIIRAGDMVIDGSVRGRLERLADVLQS</sequence>
<proteinExistence type="inferred from homology"/>
<accession>A7ZTU7</accession>